<organism>
    <name type="scientific">Campylobacter jejuni subsp. jejuni serotype O:6 (strain 81116 / NCTC 11828)</name>
    <dbReference type="NCBI Taxonomy" id="407148"/>
    <lineage>
        <taxon>Bacteria</taxon>
        <taxon>Pseudomonadati</taxon>
        <taxon>Campylobacterota</taxon>
        <taxon>Epsilonproteobacteria</taxon>
        <taxon>Campylobacterales</taxon>
        <taxon>Campylobacteraceae</taxon>
        <taxon>Campylobacter</taxon>
    </lineage>
</organism>
<proteinExistence type="inferred from homology"/>
<protein>
    <recommendedName>
        <fullName evidence="1">Na(+)/H(+) antiporter NhaA 1</fullName>
    </recommendedName>
    <alternativeName>
        <fullName evidence="1">Sodium/proton antiporter NhaA 1</fullName>
    </alternativeName>
</protein>
<gene>
    <name evidence="1" type="primary">nhaA1</name>
    <name type="ordered locus">C8J_1556</name>
</gene>
<comment type="function">
    <text evidence="1">Na(+)/H(+) antiporter that extrudes sodium in exchange for external protons.</text>
</comment>
<comment type="catalytic activity">
    <reaction evidence="1">
        <text>Na(+)(in) + 2 H(+)(out) = Na(+)(out) + 2 H(+)(in)</text>
        <dbReference type="Rhea" id="RHEA:29251"/>
        <dbReference type="ChEBI" id="CHEBI:15378"/>
        <dbReference type="ChEBI" id="CHEBI:29101"/>
    </reaction>
    <physiologicalReaction direction="left-to-right" evidence="1">
        <dbReference type="Rhea" id="RHEA:29252"/>
    </physiologicalReaction>
</comment>
<comment type="subcellular location">
    <subcellularLocation>
        <location evidence="1">Cell inner membrane</location>
        <topology evidence="1">Multi-pass membrane protein</topology>
    </subcellularLocation>
</comment>
<comment type="similarity">
    <text evidence="1">Belongs to the NhaA Na(+)/H(+) (TC 2.A.33) antiporter family.</text>
</comment>
<keyword id="KW-0050">Antiport</keyword>
<keyword id="KW-0997">Cell inner membrane</keyword>
<keyword id="KW-1003">Cell membrane</keyword>
<keyword id="KW-0406">Ion transport</keyword>
<keyword id="KW-0472">Membrane</keyword>
<keyword id="KW-0915">Sodium</keyword>
<keyword id="KW-0739">Sodium transport</keyword>
<keyword id="KW-0812">Transmembrane</keyword>
<keyword id="KW-1133">Transmembrane helix</keyword>
<keyword id="KW-0813">Transport</keyword>
<reference key="1">
    <citation type="journal article" date="2007" name="J. Bacteriol.">
        <title>The complete genome sequence of Campylobacter jejuni strain 81116 (NCTC11828).</title>
        <authorList>
            <person name="Pearson B.M."/>
            <person name="Gaskin D.J.H."/>
            <person name="Segers R.P.A.M."/>
            <person name="Wells J.M."/>
            <person name="Nuijten P.J.M."/>
            <person name="van Vliet A.H.M."/>
        </authorList>
    </citation>
    <scope>NUCLEOTIDE SEQUENCE [LARGE SCALE GENOMIC DNA]</scope>
    <source>
        <strain>81116 / NCTC 11828</strain>
    </source>
</reference>
<name>NHAA1_CAMJ8</name>
<dbReference type="EMBL" id="CP000814">
    <property type="protein sequence ID" value="ABV53153.1"/>
    <property type="molecule type" value="Genomic_DNA"/>
</dbReference>
<dbReference type="SMR" id="A8FNW6"/>
<dbReference type="KEGG" id="cju:C8J_1556"/>
<dbReference type="HOGENOM" id="CLU_015803_1_0_7"/>
<dbReference type="GO" id="GO:0005886">
    <property type="term" value="C:plasma membrane"/>
    <property type="evidence" value="ECO:0007669"/>
    <property type="project" value="UniProtKB-SubCell"/>
</dbReference>
<dbReference type="GO" id="GO:0015385">
    <property type="term" value="F:sodium:proton antiporter activity"/>
    <property type="evidence" value="ECO:0007669"/>
    <property type="project" value="TreeGrafter"/>
</dbReference>
<dbReference type="GO" id="GO:0006885">
    <property type="term" value="P:regulation of pH"/>
    <property type="evidence" value="ECO:0007669"/>
    <property type="project" value="InterPro"/>
</dbReference>
<dbReference type="Gene3D" id="1.20.1530.10">
    <property type="entry name" value="Na+/H+ antiporter like domain"/>
    <property type="match status" value="1"/>
</dbReference>
<dbReference type="HAMAP" id="MF_01844">
    <property type="entry name" value="NhaA"/>
    <property type="match status" value="1"/>
</dbReference>
<dbReference type="InterPro" id="IPR023171">
    <property type="entry name" value="Na/H_antiporter_dom_sf"/>
</dbReference>
<dbReference type="InterPro" id="IPR004670">
    <property type="entry name" value="NhaA"/>
</dbReference>
<dbReference type="NCBIfam" id="TIGR00773">
    <property type="entry name" value="NhaA"/>
    <property type="match status" value="1"/>
</dbReference>
<dbReference type="NCBIfam" id="NF007111">
    <property type="entry name" value="PRK09560.1"/>
    <property type="match status" value="1"/>
</dbReference>
<dbReference type="NCBIfam" id="NF007112">
    <property type="entry name" value="PRK09561.1"/>
    <property type="match status" value="1"/>
</dbReference>
<dbReference type="PANTHER" id="PTHR30341:SF0">
    <property type="entry name" value="NA(+)_H(+) ANTIPORTER NHAA"/>
    <property type="match status" value="1"/>
</dbReference>
<dbReference type="PANTHER" id="PTHR30341">
    <property type="entry name" value="SODIUM ION/PROTON ANTIPORTER NHAA-RELATED"/>
    <property type="match status" value="1"/>
</dbReference>
<dbReference type="Pfam" id="PF06965">
    <property type="entry name" value="Na_H_antiport_1"/>
    <property type="match status" value="1"/>
</dbReference>
<feature type="chain" id="PRO_0000334263" description="Na(+)/H(+) antiporter NhaA 1">
    <location>
        <begin position="1"/>
        <end position="389"/>
    </location>
</feature>
<feature type="transmembrane region" description="Helical" evidence="1">
    <location>
        <begin position="12"/>
        <end position="32"/>
    </location>
</feature>
<feature type="transmembrane region" description="Helical" evidence="1">
    <location>
        <begin position="62"/>
        <end position="82"/>
    </location>
</feature>
<feature type="transmembrane region" description="Helical" evidence="1">
    <location>
        <begin position="97"/>
        <end position="117"/>
    </location>
</feature>
<feature type="transmembrane region" description="Helical" evidence="1">
    <location>
        <begin position="128"/>
        <end position="148"/>
    </location>
</feature>
<feature type="transmembrane region" description="Helical" evidence="1">
    <location>
        <begin position="157"/>
        <end position="177"/>
    </location>
</feature>
<feature type="transmembrane region" description="Helical" evidence="1">
    <location>
        <begin position="184"/>
        <end position="204"/>
    </location>
</feature>
<feature type="transmembrane region" description="Helical" evidence="1">
    <location>
        <begin position="220"/>
        <end position="240"/>
    </location>
</feature>
<feature type="transmembrane region" description="Helical" evidence="1">
    <location>
        <begin position="260"/>
        <end position="280"/>
    </location>
</feature>
<feature type="transmembrane region" description="Helical" evidence="1">
    <location>
        <begin position="282"/>
        <end position="302"/>
    </location>
</feature>
<feature type="transmembrane region" description="Helical" evidence="1">
    <location>
        <begin position="331"/>
        <end position="351"/>
    </location>
</feature>
<feature type="transmembrane region" description="Helical" evidence="1">
    <location>
        <begin position="365"/>
        <end position="385"/>
    </location>
</feature>
<sequence>MNNIVHKLKTLVLNEAFGGVLLIVCTLLALLVQNGSFSEHYREFLNLKVGFSVGEFELNKPFLLWINDGLISIFFFAIGLELKKEFLHGDFKNPKNIVLPFMAALGGILIPAMLFALVNIGDAYTLKGWAIPTATDTAFALAILMMCGKHIPSSLKIFLLSLAIFDDVGAILIIAIFYTTKLSIVAFVVAGIAILAMLVLNILGITRKSFYFICSVILWISVLKSGVHATLAGIITAFFIPMQTKNGEAFLEEIYESLKFWLAFVILPLFAFANAGVNLSNIDIGAIFSGVSVGIFLGLFVGKQVGVFLFSYLAIRFKFAALPQGSNLKQLYGVCILTGIGFTMSLFIDGLAYEVSDIFNYADNLAILIASFCSGIWGFIYLKFFAARS</sequence>
<evidence type="ECO:0000255" key="1">
    <source>
        <dbReference type="HAMAP-Rule" id="MF_01844"/>
    </source>
</evidence>
<accession>A8FNW6</accession>